<feature type="chain" id="PRO_0000088186" description="Putative tyrosine-protein kinase F09A5.2">
    <location>
        <begin position="1"/>
        <end position="867"/>
    </location>
</feature>
<feature type="transmembrane region" description="Helical" evidence="1">
    <location>
        <begin position="45"/>
        <end position="65"/>
    </location>
</feature>
<feature type="transmembrane region" description="Helical" evidence="1">
    <location>
        <begin position="355"/>
        <end position="375"/>
    </location>
</feature>
<feature type="domain" description="Protein kinase" evidence="2">
    <location>
        <begin position="467"/>
        <end position="757"/>
    </location>
</feature>
<feature type="region of interest" description="Disordered" evidence="4">
    <location>
        <begin position="782"/>
        <end position="821"/>
    </location>
</feature>
<feature type="region of interest" description="Disordered" evidence="4">
    <location>
        <begin position="848"/>
        <end position="867"/>
    </location>
</feature>
<feature type="compositionally biased region" description="Acidic residues" evidence="4">
    <location>
        <begin position="801"/>
        <end position="810"/>
    </location>
</feature>
<feature type="compositionally biased region" description="Polar residues" evidence="4">
    <location>
        <begin position="858"/>
        <end position="867"/>
    </location>
</feature>
<feature type="active site" description="Proton acceptor" evidence="2">
    <location>
        <position position="626"/>
    </location>
</feature>
<feature type="binding site" evidence="2">
    <location>
        <begin position="473"/>
        <end position="481"/>
    </location>
    <ligand>
        <name>ATP</name>
        <dbReference type="ChEBI" id="CHEBI:30616"/>
    </ligand>
</feature>
<feature type="binding site" evidence="2">
    <location>
        <position position="516"/>
    </location>
    <ligand>
        <name>ATP</name>
        <dbReference type="ChEBI" id="CHEBI:30616"/>
    </ligand>
</feature>
<feature type="glycosylation site" description="N-linked (GlcNAc...) asparagine" evidence="3">
    <location>
        <position position="395"/>
    </location>
</feature>
<feature type="glycosylation site" description="N-linked (GlcNAc...) asparagine" evidence="3">
    <location>
        <position position="423"/>
    </location>
</feature>
<feature type="glycosylation site" description="N-linked (GlcNAc...) asparagine" evidence="3">
    <location>
        <position position="496"/>
    </location>
</feature>
<feature type="glycosylation site" description="N-linked (GlcNAc...) asparagine" evidence="3">
    <location>
        <position position="500"/>
    </location>
</feature>
<feature type="glycosylation site" description="N-linked (GlcNAc...) asparagine" evidence="3">
    <location>
        <position position="585"/>
    </location>
</feature>
<feature type="glycosylation site" description="N-linked (GlcNAc...) asparagine" evidence="3">
    <location>
        <position position="859"/>
    </location>
</feature>
<feature type="splice variant" id="VSP_060802" description="In isoform a." evidence="5">
    <original>HVTE</original>
    <variation>Q</variation>
    <location>
        <begin position="351"/>
        <end position="354"/>
    </location>
</feature>
<protein>
    <recommendedName>
        <fullName>Putative tyrosine-protein kinase F09A5.2</fullName>
        <ecNumber evidence="2">2.7.10.1</ecNumber>
    </recommendedName>
</protein>
<organism>
    <name type="scientific">Caenorhabditis elegans</name>
    <dbReference type="NCBI Taxonomy" id="6239"/>
    <lineage>
        <taxon>Eukaryota</taxon>
        <taxon>Metazoa</taxon>
        <taxon>Ecdysozoa</taxon>
        <taxon>Nematoda</taxon>
        <taxon>Chromadorea</taxon>
        <taxon>Rhabditida</taxon>
        <taxon>Rhabditina</taxon>
        <taxon>Rhabditomorpha</taxon>
        <taxon>Rhabditoidea</taxon>
        <taxon>Rhabditidae</taxon>
        <taxon>Peloderinae</taxon>
        <taxon>Caenorhabditis</taxon>
    </lineage>
</organism>
<comment type="catalytic activity">
    <reaction evidence="2">
        <text>L-tyrosyl-[protein] + ATP = O-phospho-L-tyrosyl-[protein] + ADP + H(+)</text>
        <dbReference type="Rhea" id="RHEA:10596"/>
        <dbReference type="Rhea" id="RHEA-COMP:10136"/>
        <dbReference type="Rhea" id="RHEA-COMP:20101"/>
        <dbReference type="ChEBI" id="CHEBI:15378"/>
        <dbReference type="ChEBI" id="CHEBI:30616"/>
        <dbReference type="ChEBI" id="CHEBI:46858"/>
        <dbReference type="ChEBI" id="CHEBI:61978"/>
        <dbReference type="ChEBI" id="CHEBI:456216"/>
        <dbReference type="EC" id="2.7.10.1"/>
    </reaction>
</comment>
<comment type="subcellular location">
    <subcellularLocation>
        <location evidence="1">Membrane</location>
        <topology evidence="1">Multi-pass membrane protein</topology>
    </subcellularLocation>
</comment>
<comment type="alternative products">
    <event type="alternative splicing"/>
    <isoform>
        <id>Q19238-1</id>
        <name evidence="7">b</name>
        <sequence type="displayed"/>
    </isoform>
    <isoform>
        <id>Q19238-2</id>
        <name evidence="6">a</name>
        <sequence type="described" ref="VSP_060802"/>
    </isoform>
</comment>
<comment type="similarity">
    <text evidence="2">Belongs to the protein kinase superfamily. Tyr protein kinase family.</text>
</comment>
<gene>
    <name evidence="7" type="ORF">F09A5.2</name>
</gene>
<reference key="1">
    <citation type="journal article" date="1998" name="Science">
        <title>Genome sequence of the nematode C. elegans: a platform for investigating biology.</title>
        <authorList>
            <consortium name="The C. elegans sequencing consortium"/>
        </authorList>
    </citation>
    <scope>NUCLEOTIDE SEQUENCE [LARGE SCALE GENOMIC DNA]</scope>
    <source>
        <strain>Bristol N2</strain>
    </source>
</reference>
<accession>Q19238</accession>
<accession>A0A4V0ILN4</accession>
<evidence type="ECO:0000255" key="1"/>
<evidence type="ECO:0000255" key="2">
    <source>
        <dbReference type="PROSITE-ProRule" id="PRU00159"/>
    </source>
</evidence>
<evidence type="ECO:0000255" key="3">
    <source>
        <dbReference type="PROSITE-ProRule" id="PRU00498"/>
    </source>
</evidence>
<evidence type="ECO:0000256" key="4">
    <source>
        <dbReference type="SAM" id="MobiDB-lite"/>
    </source>
</evidence>
<evidence type="ECO:0000305" key="5"/>
<evidence type="ECO:0000312" key="6">
    <source>
        <dbReference type="WormBase" id="F09A5.2a"/>
    </source>
</evidence>
<evidence type="ECO:0000312" key="7">
    <source>
        <dbReference type="WormBase" id="F09A5.2b"/>
    </source>
</evidence>
<name>YS3J_CAEEL</name>
<proteinExistence type="inferred from homology"/>
<dbReference type="EC" id="2.7.10.1" evidence="2"/>
<dbReference type="EMBL" id="BX284606">
    <property type="protein sequence ID" value="CAA93646.2"/>
    <property type="molecule type" value="Genomic_DNA"/>
</dbReference>
<dbReference type="EMBL" id="BX284606">
    <property type="protein sequence ID" value="VTW47554.1"/>
    <property type="molecule type" value="Genomic_DNA"/>
</dbReference>
<dbReference type="PIR" id="T20625">
    <property type="entry name" value="T20625"/>
</dbReference>
<dbReference type="RefSeq" id="NP_001359563.1">
    <molecule id="Q19238-2"/>
    <property type="nucleotide sequence ID" value="NM_001373547.3"/>
</dbReference>
<dbReference type="RefSeq" id="NP_001360730.1">
    <molecule id="Q19238-1"/>
    <property type="nucleotide sequence ID" value="NM_001373546.2"/>
</dbReference>
<dbReference type="RefSeq" id="NP_510182.1">
    <property type="nucleotide sequence ID" value="NM_077781.3"/>
</dbReference>
<dbReference type="SMR" id="Q19238"/>
<dbReference type="FunCoup" id="Q19238">
    <property type="interactions" value="5"/>
</dbReference>
<dbReference type="STRING" id="6239.F09A5.2.1"/>
<dbReference type="PaxDb" id="6239-F09A5.2"/>
<dbReference type="EnsemblMetazoa" id="F09A5.2a.1">
    <molecule id="Q19238-2"/>
    <property type="protein sequence ID" value="F09A5.2a.1"/>
    <property type="gene ID" value="WBGene00008599"/>
</dbReference>
<dbReference type="EnsemblMetazoa" id="F09A5.2b.1">
    <molecule id="Q19238-1"/>
    <property type="protein sequence ID" value="F09A5.2b.1"/>
    <property type="gene ID" value="WBGene00008599"/>
</dbReference>
<dbReference type="GeneID" id="181440"/>
<dbReference type="UCSC" id="F09A5.2">
    <molecule id="Q19238-1"/>
    <property type="organism name" value="c. elegans"/>
</dbReference>
<dbReference type="AGR" id="WB:WBGene00008599"/>
<dbReference type="WormBase" id="F09A5.2a">
    <molecule id="Q19238-2"/>
    <property type="protein sequence ID" value="CE53176"/>
    <property type="gene ID" value="WBGene00008599"/>
</dbReference>
<dbReference type="WormBase" id="F09A5.2b">
    <molecule id="Q19238-1"/>
    <property type="protein sequence ID" value="CE53228"/>
    <property type="gene ID" value="WBGene00008599"/>
</dbReference>
<dbReference type="eggNOG" id="KOG0200">
    <property type="taxonomic scope" value="Eukaryota"/>
</dbReference>
<dbReference type="HOGENOM" id="CLU_326319_0_0_1"/>
<dbReference type="InParanoid" id="Q19238"/>
<dbReference type="OrthoDB" id="535945at2759"/>
<dbReference type="PhylomeDB" id="Q19238"/>
<dbReference type="PRO" id="PR:Q19238"/>
<dbReference type="Proteomes" id="UP000001940">
    <property type="component" value="Chromosome X"/>
</dbReference>
<dbReference type="Bgee" id="WBGene00008599">
    <property type="expression patterns" value="Expressed in larva and 2 other cell types or tissues"/>
</dbReference>
<dbReference type="ExpressionAtlas" id="Q19238">
    <property type="expression patterns" value="baseline and differential"/>
</dbReference>
<dbReference type="GO" id="GO:0005886">
    <property type="term" value="C:plasma membrane"/>
    <property type="evidence" value="ECO:0000318"/>
    <property type="project" value="GO_Central"/>
</dbReference>
<dbReference type="GO" id="GO:0043235">
    <property type="term" value="C:receptor complex"/>
    <property type="evidence" value="ECO:0000318"/>
    <property type="project" value="GO_Central"/>
</dbReference>
<dbReference type="GO" id="GO:0005524">
    <property type="term" value="F:ATP binding"/>
    <property type="evidence" value="ECO:0007669"/>
    <property type="project" value="UniProtKB-KW"/>
</dbReference>
<dbReference type="GO" id="GO:0004714">
    <property type="term" value="F:transmembrane receptor protein tyrosine kinase activity"/>
    <property type="evidence" value="ECO:0000318"/>
    <property type="project" value="GO_Central"/>
</dbReference>
<dbReference type="GO" id="GO:0007169">
    <property type="term" value="P:cell surface receptor protein tyrosine kinase signaling pathway"/>
    <property type="evidence" value="ECO:0000318"/>
    <property type="project" value="GO_Central"/>
</dbReference>
<dbReference type="CDD" id="cd00192">
    <property type="entry name" value="PTKc"/>
    <property type="match status" value="1"/>
</dbReference>
<dbReference type="FunFam" id="1.10.510.10:FF:000554">
    <property type="entry name" value="Predicted protein"/>
    <property type="match status" value="1"/>
</dbReference>
<dbReference type="Gene3D" id="3.30.200.20">
    <property type="entry name" value="Phosphorylase Kinase, domain 1"/>
    <property type="match status" value="1"/>
</dbReference>
<dbReference type="Gene3D" id="1.10.510.10">
    <property type="entry name" value="Transferase(Phosphotransferase) domain 1"/>
    <property type="match status" value="1"/>
</dbReference>
<dbReference type="InterPro" id="IPR011009">
    <property type="entry name" value="Kinase-like_dom_sf"/>
</dbReference>
<dbReference type="InterPro" id="IPR000719">
    <property type="entry name" value="Prot_kinase_dom"/>
</dbReference>
<dbReference type="InterPro" id="IPR050122">
    <property type="entry name" value="RTK"/>
</dbReference>
<dbReference type="InterPro" id="IPR001245">
    <property type="entry name" value="Ser-Thr/Tyr_kinase_cat_dom"/>
</dbReference>
<dbReference type="InterPro" id="IPR008266">
    <property type="entry name" value="Tyr_kinase_AS"/>
</dbReference>
<dbReference type="InterPro" id="IPR020635">
    <property type="entry name" value="Tyr_kinase_cat_dom"/>
</dbReference>
<dbReference type="PANTHER" id="PTHR24416:SF624">
    <property type="entry name" value="TYROSINE-PROTEIN KINASE F09A5.2-RELATED"/>
    <property type="match status" value="1"/>
</dbReference>
<dbReference type="PANTHER" id="PTHR24416">
    <property type="entry name" value="TYROSINE-PROTEIN KINASE RECEPTOR"/>
    <property type="match status" value="1"/>
</dbReference>
<dbReference type="Pfam" id="PF07714">
    <property type="entry name" value="PK_Tyr_Ser-Thr"/>
    <property type="match status" value="1"/>
</dbReference>
<dbReference type="PRINTS" id="PR00109">
    <property type="entry name" value="TYRKINASE"/>
</dbReference>
<dbReference type="SMART" id="SM00219">
    <property type="entry name" value="TyrKc"/>
    <property type="match status" value="1"/>
</dbReference>
<dbReference type="SUPFAM" id="SSF56112">
    <property type="entry name" value="Protein kinase-like (PK-like)"/>
    <property type="match status" value="1"/>
</dbReference>
<dbReference type="PROSITE" id="PS50011">
    <property type="entry name" value="PROTEIN_KINASE_DOM"/>
    <property type="match status" value="1"/>
</dbReference>
<dbReference type="PROSITE" id="PS00109">
    <property type="entry name" value="PROTEIN_KINASE_TYR"/>
    <property type="match status" value="1"/>
</dbReference>
<keyword id="KW-0025">Alternative splicing</keyword>
<keyword id="KW-0067">ATP-binding</keyword>
<keyword id="KW-0325">Glycoprotein</keyword>
<keyword id="KW-0418">Kinase</keyword>
<keyword id="KW-0472">Membrane</keyword>
<keyword id="KW-0547">Nucleotide-binding</keyword>
<keyword id="KW-0675">Receptor</keyword>
<keyword id="KW-1185">Reference proteome</keyword>
<keyword id="KW-0808">Transferase</keyword>
<keyword id="KW-0812">Transmembrane</keyword>
<keyword id="KW-1133">Transmembrane helix</keyword>
<keyword id="KW-0829">Tyrosine-protein kinase</keyword>
<sequence>MHHPKETLLIDSSNPSYSHLTEYRFDNLKREESRSTSLFGDRRRVMKILSGFSLIIIVVFIFATSHEQALSTTGDLTSSTQSTTHGGVVFTYPTTRKSPGKGCVLNSQRSTPKNLKQYTGNISDACLAGIKSSNCKTWLMTNAVILKYSDDVVSNCPSILEFVNKTSLSCSGKSQIQYMYPQSDSASSDCNHSYDFNSNALNRAIYNFNYSKTLISTSYANTPGFAMYTFLLKIMNCVNKNGIKLDAGILNIFTDMTYIDLCESDVFMSSFPDTLNKLIEAGYIVKFYFLNQNLQDTQKNVENVLAGCKYMNSRSYCEIVDWSYHSENPNEFEICIPDSQPSGKKEDFNWHVTELLLIIGIPCISLTICCIAFFVCCLKCAKLKMAMMRMNVFSNDTHQNPDEMELKKRWIGMRKKFNKDVENGSCKELNTQKWSHFASANNYMDIQALANANKKDIWEIDTKNLLVQEDHLLGNGAFANVYKGIVKGKIPLLVVNNSLNMTVESENNGHYEAAIKKLPAHADEQNHLDFFHEIDFMKRLGHHPHVISMLGCVSNPYEPLIVVEYCARGDLLKFLRRHKDYVLMNKTDDCPIEADMCLRIKDLVSIAWQVADGMSYLASKNFIHRDLAARNILLTKSLTAKVSDFGLCRYMDSALYTAKGGRLPIKWMSVEALKLYEFSTKTDVWSFGVLLFEIFSMGDVPYPTIQQVDMLEHLLAGGRLSQPLKCPNEIFNIMQKCWAEKPEDRPEFNEMRGEITVMLNLDDESYGYLSVESQGGPKYTQLTMQDSKETAPCSTPGGSQDMDEDGDYDSGSEGHSQGTCAQLDQVLTERFGEEQKKEIKQIFCEITSKSMRGKRRQSNSTVSTYQS</sequence>